<protein>
    <recommendedName>
        <fullName evidence="6">Pentatricopeptide repeat-containing protein ATP4 homolog, chloroplastic</fullName>
    </recommendedName>
</protein>
<sequence>MASPSSLLSWPHRAISLSFQPKNPSPSPATARVSVQDPPPPPSDANPSPGRSSNTSRYVWVNPNSPRAAGLARARAGSGRRARLAAAAAALAACEAGEAPVAAALEAAFPEPPSEQDAVIVLNTTSARPAAVVLALWWFLRNAEVRKEVILYNVALKALRKRRRWSDAEALWEEMLREGVQPDNATFSTVISCARACGMPGKAVEWFEKMPDFGCSPDMLTYSAVIDAYGRAGDAETALRLYDRARAEKWQLDPVICATVIRVHSSSGNFDGALNVFEEMKAAGVKPNLVVYNTVLDAMGRAMRPWVVKTIHRELVSQEAVPNKATYCCLLHAYTRARYGEDAMAVYRVMKDEVMDIDVVLYNMLLSMCADIGYVEEAEEIFRDMKASMDSRSKPDSWSYSSMVTLYSCTGNVAGAEGILNEMVEAGFKPNIFILTSLIRCYGKAGRTDDVVRSFAMLEDLGITPDDRFCGCLLTVAAGTPADELGKVIGCIDRSSAQLGAVVRLLVDAAAPSEPLREAAGELLGGARGVVRMPYCNCLMDLAVNLSQMEKACALLDVALRLGIYSNVQTRTQTQWSLHLRGLSVGAALTTLHVWMSDLYAALQAGDELPPLLGIHTGQGKNTYSYKGLATVFESHLKELDAPFHEAPDKAGWFLTTSVAARHWLETKKSAELVAV</sequence>
<reference key="1">
    <citation type="journal article" date="2005" name="Genome Res.">
        <title>Sequence, annotation, and analysis of synteny between rice chromosome 3 and diverged grass species.</title>
        <authorList>
            <consortium name="The rice chromosome 3 sequencing consortium"/>
            <person name="Buell C.R."/>
            <person name="Yuan Q."/>
            <person name="Ouyang S."/>
            <person name="Liu J."/>
            <person name="Zhu W."/>
            <person name="Wang A."/>
            <person name="Maiti R."/>
            <person name="Haas B."/>
            <person name="Wortman J."/>
            <person name="Pertea M."/>
            <person name="Jones K.M."/>
            <person name="Kim M."/>
            <person name="Overton L."/>
            <person name="Tsitrin T."/>
            <person name="Fadrosh D."/>
            <person name="Bera J."/>
            <person name="Weaver B."/>
            <person name="Jin S."/>
            <person name="Johri S."/>
            <person name="Reardon M."/>
            <person name="Webb K."/>
            <person name="Hill J."/>
            <person name="Moffat K."/>
            <person name="Tallon L."/>
            <person name="Van Aken S."/>
            <person name="Lewis M."/>
            <person name="Utterback T."/>
            <person name="Feldblyum T."/>
            <person name="Zismann V."/>
            <person name="Iobst S."/>
            <person name="Hsiao J."/>
            <person name="de Vazeille A.R."/>
            <person name="Salzberg S.L."/>
            <person name="White O."/>
            <person name="Fraser C.M."/>
            <person name="Yu Y."/>
            <person name="Kim H."/>
            <person name="Rambo T."/>
            <person name="Currie J."/>
            <person name="Collura K."/>
            <person name="Kernodle-Thompson S."/>
            <person name="Wei F."/>
            <person name="Kudrna K."/>
            <person name="Ammiraju J.S.S."/>
            <person name="Luo M."/>
            <person name="Goicoechea J.L."/>
            <person name="Wing R.A."/>
            <person name="Henry D."/>
            <person name="Oates R."/>
            <person name="Palmer M."/>
            <person name="Pries G."/>
            <person name="Saski C."/>
            <person name="Simmons J."/>
            <person name="Soderlund C."/>
            <person name="Nelson W."/>
            <person name="de la Bastide M."/>
            <person name="Spiegel L."/>
            <person name="Nascimento L."/>
            <person name="Huang E."/>
            <person name="Preston R."/>
            <person name="Zutavern T."/>
            <person name="Palmer L."/>
            <person name="O'Shaughnessy A."/>
            <person name="Dike S."/>
            <person name="McCombie W.R."/>
            <person name="Minx P."/>
            <person name="Cordum H."/>
            <person name="Wilson R."/>
            <person name="Jin W."/>
            <person name="Lee H.R."/>
            <person name="Jiang J."/>
            <person name="Jackson S."/>
        </authorList>
    </citation>
    <scope>NUCLEOTIDE SEQUENCE [LARGE SCALE GENOMIC DNA]</scope>
    <source>
        <strain>cv. Nipponbare</strain>
    </source>
</reference>
<reference key="2">
    <citation type="journal article" date="2005" name="Nature">
        <title>The map-based sequence of the rice genome.</title>
        <authorList>
            <consortium name="International rice genome sequencing project (IRGSP)"/>
        </authorList>
    </citation>
    <scope>NUCLEOTIDE SEQUENCE [LARGE SCALE GENOMIC DNA]</scope>
    <source>
        <strain>cv. Nipponbare</strain>
    </source>
</reference>
<reference key="3">
    <citation type="journal article" date="2008" name="Nucleic Acids Res.">
        <title>The rice annotation project database (RAP-DB): 2008 update.</title>
        <authorList>
            <consortium name="The rice annotation project (RAP)"/>
        </authorList>
    </citation>
    <scope>GENOME REANNOTATION</scope>
    <source>
        <strain>cv. Nipponbare</strain>
    </source>
</reference>
<reference key="4">
    <citation type="journal article" date="2013" name="Rice">
        <title>Improvement of the Oryza sativa Nipponbare reference genome using next generation sequence and optical map data.</title>
        <authorList>
            <person name="Kawahara Y."/>
            <person name="de la Bastide M."/>
            <person name="Hamilton J.P."/>
            <person name="Kanamori H."/>
            <person name="McCombie W.R."/>
            <person name="Ouyang S."/>
            <person name="Schwartz D.C."/>
            <person name="Tanaka T."/>
            <person name="Wu J."/>
            <person name="Zhou S."/>
            <person name="Childs K.L."/>
            <person name="Davidson R.M."/>
            <person name="Lin H."/>
            <person name="Quesada-Ocampo L."/>
            <person name="Vaillancourt B."/>
            <person name="Sakai H."/>
            <person name="Lee S.S."/>
            <person name="Kim J."/>
            <person name="Numa H."/>
            <person name="Itoh T."/>
            <person name="Buell C.R."/>
            <person name="Matsumoto T."/>
        </authorList>
    </citation>
    <scope>GENOME REANNOTATION</scope>
    <source>
        <strain>cv. Nipponbare</strain>
    </source>
</reference>
<feature type="transit peptide" description="Chloroplast" evidence="2">
    <location>
        <begin position="1"/>
        <end position="73"/>
    </location>
</feature>
<feature type="chain" id="PRO_0000441905" description="Pentatricopeptide repeat-containing protein ATP4 homolog, chloroplastic">
    <location>
        <begin position="74"/>
        <end position="676"/>
    </location>
</feature>
<feature type="repeat" description="PPR 1" evidence="4">
    <location>
        <begin position="148"/>
        <end position="182"/>
    </location>
</feature>
<feature type="repeat" description="PPR 2" evidence="4">
    <location>
        <begin position="183"/>
        <end position="217"/>
    </location>
</feature>
<feature type="repeat" description="PPR 3" evidence="4">
    <location>
        <begin position="218"/>
        <end position="252"/>
    </location>
</feature>
<feature type="repeat" description="PPR 4" evidence="4">
    <location>
        <begin position="253"/>
        <end position="287"/>
    </location>
</feature>
<feature type="repeat" description="PPR 5" evidence="4">
    <location>
        <begin position="288"/>
        <end position="322"/>
    </location>
</feature>
<feature type="repeat" description="PPR 6" evidence="4">
    <location>
        <begin position="323"/>
        <end position="353"/>
    </location>
</feature>
<feature type="repeat" description="PPR 7" evidence="4">
    <location>
        <begin position="358"/>
        <end position="388"/>
    </location>
</feature>
<feature type="repeat" description="PPR 8" evidence="4">
    <location>
        <begin position="396"/>
        <end position="430"/>
    </location>
</feature>
<feature type="repeat" description="PPR 9" evidence="4">
    <location>
        <begin position="431"/>
        <end position="465"/>
    </location>
</feature>
<feature type="repeat" description="PPR 10" evidence="4">
    <location>
        <begin position="532"/>
        <end position="566"/>
    </location>
</feature>
<feature type="domain" description="Smr" evidence="3">
    <location>
        <begin position="578"/>
        <end position="662"/>
    </location>
</feature>
<feature type="region of interest" description="Disordered" evidence="5">
    <location>
        <begin position="17"/>
        <end position="58"/>
    </location>
</feature>
<name>ATP4_ORYSJ</name>
<gene>
    <name evidence="8" type="ordered locus">Os03g0215900</name>
    <name evidence="7" type="ordered locus">LOC_Os03g11670</name>
</gene>
<comment type="function">
    <text evidence="1">Involved in translation and accumulation of chloroplast ATP synthase subunits.</text>
</comment>
<comment type="subcellular location">
    <subcellularLocation>
        <location evidence="2">Plastid</location>
        <location evidence="2">Chloroplast</location>
    </subcellularLocation>
</comment>
<comment type="similarity">
    <text evidence="6">Belongs to the PPR family. P subfamily.</text>
</comment>
<evidence type="ECO:0000250" key="1">
    <source>
        <dbReference type="UniProtKB" id="B4F8Z1"/>
    </source>
</evidence>
<evidence type="ECO:0000255" key="2"/>
<evidence type="ECO:0000255" key="3">
    <source>
        <dbReference type="PROSITE-ProRule" id="PRU00321"/>
    </source>
</evidence>
<evidence type="ECO:0000255" key="4">
    <source>
        <dbReference type="PROSITE-ProRule" id="PRU00708"/>
    </source>
</evidence>
<evidence type="ECO:0000256" key="5">
    <source>
        <dbReference type="SAM" id="MobiDB-lite"/>
    </source>
</evidence>
<evidence type="ECO:0000305" key="6"/>
<evidence type="ECO:0000312" key="7">
    <source>
        <dbReference type="EMBL" id="ABF94642.1"/>
    </source>
</evidence>
<evidence type="ECO:0000312" key="8">
    <source>
        <dbReference type="EMBL" id="BAF11294.2"/>
    </source>
</evidence>
<proteinExistence type="inferred from homology"/>
<dbReference type="EMBL" id="DP000009">
    <property type="protein sequence ID" value="ABF94642.1"/>
    <property type="molecule type" value="Genomic_DNA"/>
</dbReference>
<dbReference type="EMBL" id="AP008209">
    <property type="protein sequence ID" value="BAF11294.2"/>
    <property type="molecule type" value="Genomic_DNA"/>
</dbReference>
<dbReference type="EMBL" id="AP014959">
    <property type="protein sequence ID" value="BAS82967.1"/>
    <property type="molecule type" value="Genomic_DNA"/>
</dbReference>
<dbReference type="SMR" id="Q10PZ4"/>
<dbReference type="FunCoup" id="Q10PZ4">
    <property type="interactions" value="1985"/>
</dbReference>
<dbReference type="STRING" id="39947.Q10PZ4"/>
<dbReference type="PaxDb" id="39947-Q10PZ4"/>
<dbReference type="EnsemblPlants" id="Os03t0215900-01">
    <property type="protein sequence ID" value="Os03t0215900-01"/>
    <property type="gene ID" value="Os03g0215900"/>
</dbReference>
<dbReference type="Gramene" id="Os03t0215900-01">
    <property type="protein sequence ID" value="Os03t0215900-01"/>
    <property type="gene ID" value="Os03g0215900"/>
</dbReference>
<dbReference type="KEGG" id="dosa:Os03g0215900"/>
<dbReference type="KEGG" id="osa:4332063"/>
<dbReference type="eggNOG" id="KOG4197">
    <property type="taxonomic scope" value="Eukaryota"/>
</dbReference>
<dbReference type="HOGENOM" id="CLU_018319_1_0_1"/>
<dbReference type="InParanoid" id="Q10PZ4"/>
<dbReference type="OMA" id="RPWQAKK"/>
<dbReference type="OrthoDB" id="185373at2759"/>
<dbReference type="Proteomes" id="UP000000763">
    <property type="component" value="Chromosome 3"/>
</dbReference>
<dbReference type="Proteomes" id="UP000059680">
    <property type="component" value="Chromosome 3"/>
</dbReference>
<dbReference type="GO" id="GO:0009570">
    <property type="term" value="C:chloroplast stroma"/>
    <property type="evidence" value="ECO:0000318"/>
    <property type="project" value="GO_Central"/>
</dbReference>
<dbReference type="GO" id="GO:0003729">
    <property type="term" value="F:mRNA binding"/>
    <property type="evidence" value="ECO:0000318"/>
    <property type="project" value="GO_Central"/>
</dbReference>
<dbReference type="GO" id="GO:0042134">
    <property type="term" value="F:rRNA primary transcript binding"/>
    <property type="evidence" value="ECO:0000318"/>
    <property type="project" value="GO_Central"/>
</dbReference>
<dbReference type="GO" id="GO:0009658">
    <property type="term" value="P:chloroplast organization"/>
    <property type="evidence" value="ECO:0007669"/>
    <property type="project" value="EnsemblPlants"/>
</dbReference>
<dbReference type="GO" id="GO:0031425">
    <property type="term" value="P:chloroplast RNA processing"/>
    <property type="evidence" value="ECO:0007669"/>
    <property type="project" value="EnsemblPlants"/>
</dbReference>
<dbReference type="GO" id="GO:0045727">
    <property type="term" value="P:positive regulation of translation"/>
    <property type="evidence" value="ECO:0000318"/>
    <property type="project" value="GO_Central"/>
</dbReference>
<dbReference type="FunFam" id="1.25.40.10:FF:000509">
    <property type="entry name" value="Pentatricopeptide repeat-containing protein At4g16390, chloroplastic"/>
    <property type="match status" value="1"/>
</dbReference>
<dbReference type="FunFam" id="1.25.40.10:FF:001363">
    <property type="entry name" value="Pentatricopeptide repeat-containing protein ATP4 homolog, chloroplastic"/>
    <property type="match status" value="1"/>
</dbReference>
<dbReference type="FunFam" id="1.25.40.10:FF:001282">
    <property type="entry name" value="Pentatricopeptide repeat-containing protein ATP4, chloroplastic"/>
    <property type="match status" value="1"/>
</dbReference>
<dbReference type="Gene3D" id="1.25.40.10">
    <property type="entry name" value="Tetratricopeptide repeat domain"/>
    <property type="match status" value="3"/>
</dbReference>
<dbReference type="InterPro" id="IPR002885">
    <property type="entry name" value="Pentatricopeptide_rpt"/>
</dbReference>
<dbReference type="InterPro" id="IPR033443">
    <property type="entry name" value="PROP1-like_PPR_dom"/>
</dbReference>
<dbReference type="InterPro" id="IPR002625">
    <property type="entry name" value="Smr_dom"/>
</dbReference>
<dbReference type="InterPro" id="IPR011990">
    <property type="entry name" value="TPR-like_helical_dom_sf"/>
</dbReference>
<dbReference type="NCBIfam" id="TIGR00756">
    <property type="entry name" value="PPR"/>
    <property type="match status" value="8"/>
</dbReference>
<dbReference type="PANTHER" id="PTHR47447">
    <property type="entry name" value="OS03G0856100 PROTEIN"/>
    <property type="match status" value="1"/>
</dbReference>
<dbReference type="PANTHER" id="PTHR47447:SF12">
    <property type="entry name" value="PENTATRICOPEPTIDE REPEAT-CONTAINING PROTEIN ATP4 HOMOLOG, CHLOROPLASTIC"/>
    <property type="match status" value="1"/>
</dbReference>
<dbReference type="Pfam" id="PF12854">
    <property type="entry name" value="PPR_1"/>
    <property type="match status" value="1"/>
</dbReference>
<dbReference type="Pfam" id="PF13041">
    <property type="entry name" value="PPR_2"/>
    <property type="match status" value="2"/>
</dbReference>
<dbReference type="Pfam" id="PF17177">
    <property type="entry name" value="PPR_long"/>
    <property type="match status" value="1"/>
</dbReference>
<dbReference type="SMART" id="SM00463">
    <property type="entry name" value="SMR"/>
    <property type="match status" value="1"/>
</dbReference>
<dbReference type="PROSITE" id="PS51375">
    <property type="entry name" value="PPR"/>
    <property type="match status" value="10"/>
</dbReference>
<dbReference type="PROSITE" id="PS50828">
    <property type="entry name" value="SMR"/>
    <property type="match status" value="1"/>
</dbReference>
<organism>
    <name type="scientific">Oryza sativa subsp. japonica</name>
    <name type="common">Rice</name>
    <dbReference type="NCBI Taxonomy" id="39947"/>
    <lineage>
        <taxon>Eukaryota</taxon>
        <taxon>Viridiplantae</taxon>
        <taxon>Streptophyta</taxon>
        <taxon>Embryophyta</taxon>
        <taxon>Tracheophyta</taxon>
        <taxon>Spermatophyta</taxon>
        <taxon>Magnoliopsida</taxon>
        <taxon>Liliopsida</taxon>
        <taxon>Poales</taxon>
        <taxon>Poaceae</taxon>
        <taxon>BOP clade</taxon>
        <taxon>Oryzoideae</taxon>
        <taxon>Oryzeae</taxon>
        <taxon>Oryzinae</taxon>
        <taxon>Oryza</taxon>
        <taxon>Oryza sativa</taxon>
    </lineage>
</organism>
<accession>Q10PZ4</accession>
<accession>Q0DTZ4</accession>
<keyword id="KW-0150">Chloroplast</keyword>
<keyword id="KW-0934">Plastid</keyword>
<keyword id="KW-1185">Reference proteome</keyword>
<keyword id="KW-0677">Repeat</keyword>
<keyword id="KW-0809">Transit peptide</keyword>
<keyword id="KW-0810">Translation regulation</keyword>